<geneLocation type="chloroplast"/>
<feature type="chain" id="PRO_0000143363" description="Maturase K">
    <location>
        <begin position="1"/>
        <end position="516"/>
    </location>
</feature>
<evidence type="ECO:0000255" key="1">
    <source>
        <dbReference type="HAMAP-Rule" id="MF_01390"/>
    </source>
</evidence>
<proteinExistence type="inferred from homology"/>
<dbReference type="EMBL" id="AB040182">
    <property type="protein sequence ID" value="BAB16790.2"/>
    <property type="molecule type" value="Genomic_DNA"/>
</dbReference>
<dbReference type="GO" id="GO:0009507">
    <property type="term" value="C:chloroplast"/>
    <property type="evidence" value="ECO:0007669"/>
    <property type="project" value="UniProtKB-SubCell"/>
</dbReference>
<dbReference type="GO" id="GO:0003723">
    <property type="term" value="F:RNA binding"/>
    <property type="evidence" value="ECO:0007669"/>
    <property type="project" value="UniProtKB-KW"/>
</dbReference>
<dbReference type="GO" id="GO:0006397">
    <property type="term" value="P:mRNA processing"/>
    <property type="evidence" value="ECO:0007669"/>
    <property type="project" value="UniProtKB-KW"/>
</dbReference>
<dbReference type="GO" id="GO:0008380">
    <property type="term" value="P:RNA splicing"/>
    <property type="evidence" value="ECO:0007669"/>
    <property type="project" value="UniProtKB-UniRule"/>
</dbReference>
<dbReference type="GO" id="GO:0008033">
    <property type="term" value="P:tRNA processing"/>
    <property type="evidence" value="ECO:0007669"/>
    <property type="project" value="UniProtKB-KW"/>
</dbReference>
<dbReference type="HAMAP" id="MF_01390">
    <property type="entry name" value="MatK"/>
    <property type="match status" value="1"/>
</dbReference>
<dbReference type="InterPro" id="IPR024937">
    <property type="entry name" value="Domain_X"/>
</dbReference>
<dbReference type="InterPro" id="IPR002866">
    <property type="entry name" value="Maturase_MatK"/>
</dbReference>
<dbReference type="InterPro" id="IPR024942">
    <property type="entry name" value="Maturase_MatK_N"/>
</dbReference>
<dbReference type="PANTHER" id="PTHR34811">
    <property type="entry name" value="MATURASE K"/>
    <property type="match status" value="1"/>
</dbReference>
<dbReference type="PANTHER" id="PTHR34811:SF1">
    <property type="entry name" value="MATURASE K"/>
    <property type="match status" value="1"/>
</dbReference>
<dbReference type="Pfam" id="PF01348">
    <property type="entry name" value="Intron_maturas2"/>
    <property type="match status" value="1"/>
</dbReference>
<dbReference type="Pfam" id="PF01824">
    <property type="entry name" value="MatK_N"/>
    <property type="match status" value="1"/>
</dbReference>
<reference key="1">
    <citation type="journal article" date="2000" name="Plant Biol.">
        <title>A phylogenetic analysis of the plastid matK gene with emphasis on Melanthiaceae sensu lato.</title>
        <authorList>
            <person name="Fuse S."/>
            <person name="Tamura M.N."/>
        </authorList>
    </citation>
    <scope>NUCLEOTIDE SEQUENCE [GENOMIC DNA]</scope>
</reference>
<name>MATK_DISSE</name>
<comment type="function">
    <text evidence="1">Usually encoded in the trnK tRNA gene intron. Probably assists in splicing its own and other chloroplast group II introns.</text>
</comment>
<comment type="subcellular location">
    <subcellularLocation>
        <location>Plastid</location>
        <location>Chloroplast</location>
    </subcellularLocation>
</comment>
<comment type="similarity">
    <text evidence="1">Belongs to the intron maturase 2 family. MatK subfamily.</text>
</comment>
<organism>
    <name type="scientific">Disporum sessile</name>
    <name type="common">Japanese fairy bells</name>
    <name type="synonym">Uvularia sessilis</name>
    <dbReference type="NCBI Taxonomy" id="34188"/>
    <lineage>
        <taxon>Eukaryota</taxon>
        <taxon>Viridiplantae</taxon>
        <taxon>Streptophyta</taxon>
        <taxon>Embryophyta</taxon>
        <taxon>Tracheophyta</taxon>
        <taxon>Spermatophyta</taxon>
        <taxon>Magnoliopsida</taxon>
        <taxon>Liliopsida</taxon>
        <taxon>Liliales</taxon>
        <taxon>Colchicaceae</taxon>
        <taxon>Disporum</taxon>
    </lineage>
</organism>
<sequence>MEXLQGYLEXDRSRQQYFLYPLLFQEYIYTLAHGHGLNGSIFDEPVEIFGFDNKSSSVLVKRLITRMYQQNYLVYLVNDSNQNRSIGRNHFFYSQFFFQMVSEGFAAIVEIPFSLQLVFSSXEXERPKSHNLRSIHSIFPFLEDKFSHLNYVSEILIPHPIHMETLVQILQCWVRDVPSLHFLRFFLHEYDNWNSFITPNKSSYAFSKENKRFFWFFYNSYVFEFEFLLVFLRKQSYYLQSTSFGXFLDRXHFYGKKERLISACCNYSQKTLRFFKDPFMHYIRYQGKAILASRDTHILMKKWKCYLVNFWQYYFHFLSYPYRIQINQLKNHSFFFLGYLSSVLINPLAVKNKMLDHSFLIDTVTKKFDTTIPVIPLIGSLSKAKFCTVSGYPSSKTIWADLSDSDIVGRFGRICRNLSHYYSGSSKKQSLYRIKYXXRLSCARTLARKHKRTIRTLLQRLGSGFLEEFFTEEEQVLSLIFSKTTIPFPLYRLHRERIWYLDIIRINDLTNHLDWP</sequence>
<gene>
    <name evidence="1" type="primary">matK</name>
</gene>
<keyword id="KW-0150">Chloroplast</keyword>
<keyword id="KW-0507">mRNA processing</keyword>
<keyword id="KW-0934">Plastid</keyword>
<keyword id="KW-0694">RNA-binding</keyword>
<keyword id="KW-0819">tRNA processing</keyword>
<accession>Q9GHE1</accession>
<protein>
    <recommendedName>
        <fullName evidence="1">Maturase K</fullName>
    </recommendedName>
    <alternativeName>
        <fullName evidence="1">Intron maturase</fullName>
    </alternativeName>
</protein>